<accession>Q81G08</accession>
<comment type="function">
    <text evidence="1">Required for the first step of histidine biosynthesis. May allow the feedback regulation of ATP phosphoribosyltransferase activity by histidine.</text>
</comment>
<comment type="pathway">
    <text evidence="1">Amino-acid biosynthesis; L-histidine biosynthesis; L-histidine from 5-phospho-alpha-D-ribose 1-diphosphate: step 1/9.</text>
</comment>
<comment type="subunit">
    <text evidence="1">Heteromultimer composed of HisG and HisZ subunits.</text>
</comment>
<comment type="subcellular location">
    <subcellularLocation>
        <location evidence="1">Cytoplasm</location>
    </subcellularLocation>
</comment>
<comment type="miscellaneous">
    <text>This function is generally fulfilled by the C-terminal part of HisG, which is missing in some bacteria such as this one.</text>
</comment>
<comment type="similarity">
    <text evidence="1">Belongs to the class-II aminoacyl-tRNA synthetase family. HisZ subfamily.</text>
</comment>
<organism>
    <name type="scientific">Bacillus cereus (strain ATCC 14579 / DSM 31 / CCUG 7414 / JCM 2152 / NBRC 15305 / NCIMB 9373 / NCTC 2599 / NRRL B-3711)</name>
    <dbReference type="NCBI Taxonomy" id="226900"/>
    <lineage>
        <taxon>Bacteria</taxon>
        <taxon>Bacillati</taxon>
        <taxon>Bacillota</taxon>
        <taxon>Bacilli</taxon>
        <taxon>Bacillales</taxon>
        <taxon>Bacillaceae</taxon>
        <taxon>Bacillus</taxon>
        <taxon>Bacillus cereus group</taxon>
    </lineage>
</organism>
<sequence>MTKWKRANPNGTRDYLFEECTLIEEVEQKLRLTFLERGYEEIRTPTIEFYDVFAFQNRPIDEEKMYKFFDEKGRIIVLRPDMTIPLARVIGTQRWDTPLKVTYSGNVFRANESHSGKYNEIVQSGIEVIGIDNVRAEIECVISVIQALQKLKVQSFTIEIGQVQLYKCIVKKLSIQDEEERVLRTYIESKNYAALSNFIGEKKLDRCDETVRLLEKLPRLFGNLEVIEEAEKLASSNEMKMAIARVKEMYETIEMLGYGSYISIDLGMIQHLDYYTGVIFKGYIYEIGEEIVSGGRYDELIGNFGEMLPAVGLAVQVNQIVKALQEQQEPYERNQIDIVIHYELNRLAEAERLRNLLRKDGKNAWLSLFSNLSDTFQFARKNKIGTVVEAQNEYLVEYVWNEKWVVQKEGEASCVTFKLR</sequence>
<evidence type="ECO:0000255" key="1">
    <source>
        <dbReference type="HAMAP-Rule" id="MF_00125"/>
    </source>
</evidence>
<name>HISZ_BACCR</name>
<reference key="1">
    <citation type="journal article" date="2003" name="Nature">
        <title>Genome sequence of Bacillus cereus and comparative analysis with Bacillus anthracis.</title>
        <authorList>
            <person name="Ivanova N."/>
            <person name="Sorokin A."/>
            <person name="Anderson I."/>
            <person name="Galleron N."/>
            <person name="Candelon B."/>
            <person name="Kapatral V."/>
            <person name="Bhattacharyya A."/>
            <person name="Reznik G."/>
            <person name="Mikhailova N."/>
            <person name="Lapidus A."/>
            <person name="Chu L."/>
            <person name="Mazur M."/>
            <person name="Goltsman E."/>
            <person name="Larsen N."/>
            <person name="D'Souza M."/>
            <person name="Walunas T."/>
            <person name="Grechkin Y."/>
            <person name="Pusch G."/>
            <person name="Haselkorn R."/>
            <person name="Fonstein M."/>
            <person name="Ehrlich S.D."/>
            <person name="Overbeek R."/>
            <person name="Kyrpides N.C."/>
        </authorList>
    </citation>
    <scope>NUCLEOTIDE SEQUENCE [LARGE SCALE GENOMIC DNA]</scope>
    <source>
        <strain>ATCC 14579 / DSM 31 / CCUG 7414 / JCM 2152 / NBRC 15305 / NCIMB 9373 / NCTC 2599 / NRRL B-3711</strain>
    </source>
</reference>
<protein>
    <recommendedName>
        <fullName evidence="1">ATP phosphoribosyltransferase regulatory subunit</fullName>
    </recommendedName>
</protein>
<gene>
    <name evidence="1" type="primary">hisZ</name>
    <name type="ordered locus">BC_1404</name>
</gene>
<feature type="chain" id="PRO_0000171024" description="ATP phosphoribosyltransferase regulatory subunit">
    <location>
        <begin position="1"/>
        <end position="420"/>
    </location>
</feature>
<keyword id="KW-0028">Amino-acid biosynthesis</keyword>
<keyword id="KW-0963">Cytoplasm</keyword>
<keyword id="KW-0368">Histidine biosynthesis</keyword>
<keyword id="KW-1185">Reference proteome</keyword>
<proteinExistence type="inferred from homology"/>
<dbReference type="EMBL" id="AE016877">
    <property type="protein sequence ID" value="AAP08385.1"/>
    <property type="molecule type" value="Genomic_DNA"/>
</dbReference>
<dbReference type="RefSeq" id="NP_831184.1">
    <property type="nucleotide sequence ID" value="NC_004722.1"/>
</dbReference>
<dbReference type="RefSeq" id="WP_000170297.1">
    <property type="nucleotide sequence ID" value="NC_004722.1"/>
</dbReference>
<dbReference type="SMR" id="Q81G08"/>
<dbReference type="STRING" id="226900.BC_1404"/>
<dbReference type="KEGG" id="bce:BC1404"/>
<dbReference type="PATRIC" id="fig|226900.8.peg.1381"/>
<dbReference type="HOGENOM" id="CLU_025113_0_0_9"/>
<dbReference type="OrthoDB" id="9800814at2"/>
<dbReference type="UniPathway" id="UPA00031">
    <property type="reaction ID" value="UER00006"/>
</dbReference>
<dbReference type="Proteomes" id="UP000001417">
    <property type="component" value="Chromosome"/>
</dbReference>
<dbReference type="GO" id="GO:0005737">
    <property type="term" value="C:cytoplasm"/>
    <property type="evidence" value="ECO:0007669"/>
    <property type="project" value="UniProtKB-SubCell"/>
</dbReference>
<dbReference type="GO" id="GO:0140096">
    <property type="term" value="F:catalytic activity, acting on a protein"/>
    <property type="evidence" value="ECO:0007669"/>
    <property type="project" value="UniProtKB-ARBA"/>
</dbReference>
<dbReference type="GO" id="GO:0004821">
    <property type="term" value="F:histidine-tRNA ligase activity"/>
    <property type="evidence" value="ECO:0000318"/>
    <property type="project" value="GO_Central"/>
</dbReference>
<dbReference type="GO" id="GO:0016740">
    <property type="term" value="F:transferase activity"/>
    <property type="evidence" value="ECO:0007669"/>
    <property type="project" value="UniProtKB-ARBA"/>
</dbReference>
<dbReference type="GO" id="GO:0006427">
    <property type="term" value="P:histidyl-tRNA aminoacylation"/>
    <property type="evidence" value="ECO:0000318"/>
    <property type="project" value="GO_Central"/>
</dbReference>
<dbReference type="GO" id="GO:0000105">
    <property type="term" value="P:L-histidine biosynthetic process"/>
    <property type="evidence" value="ECO:0007669"/>
    <property type="project" value="UniProtKB-UniRule"/>
</dbReference>
<dbReference type="CDD" id="cd00773">
    <property type="entry name" value="HisRS-like_core"/>
    <property type="match status" value="1"/>
</dbReference>
<dbReference type="FunFam" id="3.30.930.10:FF:000060">
    <property type="entry name" value="ATP phosphoribosyltransferase regulatory subunit"/>
    <property type="match status" value="1"/>
</dbReference>
<dbReference type="Gene3D" id="3.30.930.10">
    <property type="entry name" value="Bira Bifunctional Protein, Domain 2"/>
    <property type="match status" value="1"/>
</dbReference>
<dbReference type="HAMAP" id="MF_00125">
    <property type="entry name" value="HisZ"/>
    <property type="match status" value="1"/>
</dbReference>
<dbReference type="InterPro" id="IPR006195">
    <property type="entry name" value="aa-tRNA-synth_II"/>
</dbReference>
<dbReference type="InterPro" id="IPR045864">
    <property type="entry name" value="aa-tRNA-synth_II/BPL/LPL"/>
</dbReference>
<dbReference type="InterPro" id="IPR041715">
    <property type="entry name" value="HisRS-like_core"/>
</dbReference>
<dbReference type="InterPro" id="IPR004516">
    <property type="entry name" value="HisRS/HisZ"/>
</dbReference>
<dbReference type="InterPro" id="IPR004517">
    <property type="entry name" value="HisZ"/>
</dbReference>
<dbReference type="NCBIfam" id="TIGR00443">
    <property type="entry name" value="hisZ_biosyn_reg"/>
    <property type="match status" value="1"/>
</dbReference>
<dbReference type="NCBIfam" id="NF008938">
    <property type="entry name" value="PRK12292.1-6"/>
    <property type="match status" value="1"/>
</dbReference>
<dbReference type="PANTHER" id="PTHR43707:SF6">
    <property type="entry name" value="ATP PHOSPHORIBOSYLTRANSFERASE REGULATORY SUBUNIT"/>
    <property type="match status" value="1"/>
</dbReference>
<dbReference type="PANTHER" id="PTHR43707">
    <property type="entry name" value="HISTIDYL-TRNA SYNTHETASE"/>
    <property type="match status" value="1"/>
</dbReference>
<dbReference type="Pfam" id="PF13393">
    <property type="entry name" value="tRNA-synt_His"/>
    <property type="match status" value="1"/>
</dbReference>
<dbReference type="PIRSF" id="PIRSF001549">
    <property type="entry name" value="His-tRNA_synth"/>
    <property type="match status" value="1"/>
</dbReference>
<dbReference type="SUPFAM" id="SSF55681">
    <property type="entry name" value="Class II aaRS and biotin synthetases"/>
    <property type="match status" value="1"/>
</dbReference>
<dbReference type="PROSITE" id="PS50862">
    <property type="entry name" value="AA_TRNA_LIGASE_II"/>
    <property type="match status" value="1"/>
</dbReference>